<organism>
    <name type="scientific">Streptococcus pyogenes serotype M28 (strain MGAS6180)</name>
    <dbReference type="NCBI Taxonomy" id="319701"/>
    <lineage>
        <taxon>Bacteria</taxon>
        <taxon>Bacillati</taxon>
        <taxon>Bacillota</taxon>
        <taxon>Bacilli</taxon>
        <taxon>Lactobacillales</taxon>
        <taxon>Streptococcaceae</taxon>
        <taxon>Streptococcus</taxon>
    </lineage>
</organism>
<dbReference type="EC" id="4.1.1.23" evidence="1"/>
<dbReference type="EMBL" id="CP000056">
    <property type="protein sequence ID" value="AAX71796.1"/>
    <property type="molecule type" value="Genomic_DNA"/>
</dbReference>
<dbReference type="RefSeq" id="WP_002990139.1">
    <property type="nucleotide sequence ID" value="NC_007296.2"/>
</dbReference>
<dbReference type="SMR" id="Q48U10"/>
<dbReference type="GeneID" id="69900998"/>
<dbReference type="KEGG" id="spb:M28_Spy0683"/>
<dbReference type="HOGENOM" id="CLU_067069_1_1_9"/>
<dbReference type="UniPathway" id="UPA00070">
    <property type="reaction ID" value="UER00120"/>
</dbReference>
<dbReference type="GO" id="GO:0005829">
    <property type="term" value="C:cytosol"/>
    <property type="evidence" value="ECO:0007669"/>
    <property type="project" value="TreeGrafter"/>
</dbReference>
<dbReference type="GO" id="GO:0004590">
    <property type="term" value="F:orotidine-5'-phosphate decarboxylase activity"/>
    <property type="evidence" value="ECO:0007669"/>
    <property type="project" value="UniProtKB-UniRule"/>
</dbReference>
<dbReference type="GO" id="GO:0006207">
    <property type="term" value="P:'de novo' pyrimidine nucleobase biosynthetic process"/>
    <property type="evidence" value="ECO:0007669"/>
    <property type="project" value="InterPro"/>
</dbReference>
<dbReference type="GO" id="GO:0044205">
    <property type="term" value="P:'de novo' UMP biosynthetic process"/>
    <property type="evidence" value="ECO:0007669"/>
    <property type="project" value="UniProtKB-UniRule"/>
</dbReference>
<dbReference type="CDD" id="cd04725">
    <property type="entry name" value="OMP_decarboxylase_like"/>
    <property type="match status" value="1"/>
</dbReference>
<dbReference type="FunFam" id="3.20.20.70:FF:000015">
    <property type="entry name" value="Orotidine 5'-phosphate decarboxylase"/>
    <property type="match status" value="1"/>
</dbReference>
<dbReference type="Gene3D" id="3.20.20.70">
    <property type="entry name" value="Aldolase class I"/>
    <property type="match status" value="1"/>
</dbReference>
<dbReference type="HAMAP" id="MF_01200_B">
    <property type="entry name" value="OMPdecase_type1_B"/>
    <property type="match status" value="1"/>
</dbReference>
<dbReference type="InterPro" id="IPR013785">
    <property type="entry name" value="Aldolase_TIM"/>
</dbReference>
<dbReference type="InterPro" id="IPR014732">
    <property type="entry name" value="OMPdecase"/>
</dbReference>
<dbReference type="InterPro" id="IPR018089">
    <property type="entry name" value="OMPdecase_AS"/>
</dbReference>
<dbReference type="InterPro" id="IPR047596">
    <property type="entry name" value="OMPdecase_bac"/>
</dbReference>
<dbReference type="InterPro" id="IPR001754">
    <property type="entry name" value="OMPdeCOase_dom"/>
</dbReference>
<dbReference type="InterPro" id="IPR011060">
    <property type="entry name" value="RibuloseP-bd_barrel"/>
</dbReference>
<dbReference type="NCBIfam" id="NF001273">
    <property type="entry name" value="PRK00230.1"/>
    <property type="match status" value="1"/>
</dbReference>
<dbReference type="NCBIfam" id="TIGR01740">
    <property type="entry name" value="pyrF"/>
    <property type="match status" value="1"/>
</dbReference>
<dbReference type="PANTHER" id="PTHR32119">
    <property type="entry name" value="OROTIDINE 5'-PHOSPHATE DECARBOXYLASE"/>
    <property type="match status" value="1"/>
</dbReference>
<dbReference type="PANTHER" id="PTHR32119:SF2">
    <property type="entry name" value="OROTIDINE 5'-PHOSPHATE DECARBOXYLASE"/>
    <property type="match status" value="1"/>
</dbReference>
<dbReference type="Pfam" id="PF00215">
    <property type="entry name" value="OMPdecase"/>
    <property type="match status" value="1"/>
</dbReference>
<dbReference type="SMART" id="SM00934">
    <property type="entry name" value="OMPdecase"/>
    <property type="match status" value="1"/>
</dbReference>
<dbReference type="SUPFAM" id="SSF51366">
    <property type="entry name" value="Ribulose-phoshate binding barrel"/>
    <property type="match status" value="1"/>
</dbReference>
<dbReference type="PROSITE" id="PS00156">
    <property type="entry name" value="OMPDECASE"/>
    <property type="match status" value="1"/>
</dbReference>
<name>PYRF_STRPM</name>
<protein>
    <recommendedName>
        <fullName evidence="1">Orotidine 5'-phosphate decarboxylase</fullName>
        <ecNumber evidence="1">4.1.1.23</ecNumber>
    </recommendedName>
    <alternativeName>
        <fullName evidence="1">OMP decarboxylase</fullName>
        <shortName evidence="1">OMPDCase</shortName>
        <shortName evidence="1">OMPdecase</shortName>
    </alternativeName>
</protein>
<reference key="1">
    <citation type="journal article" date="2005" name="J. Infect. Dis.">
        <title>Genome sequence of a serotype M28 strain of group A Streptococcus: potential new insights into puerperal sepsis and bacterial disease specificity.</title>
        <authorList>
            <person name="Green N.M."/>
            <person name="Zhang S."/>
            <person name="Porcella S.F."/>
            <person name="Nagiec M.J."/>
            <person name="Barbian K.D."/>
            <person name="Beres S.B."/>
            <person name="Lefebvre R.B."/>
            <person name="Musser J.M."/>
        </authorList>
    </citation>
    <scope>NUCLEOTIDE SEQUENCE [LARGE SCALE GENOMIC DNA]</scope>
    <source>
        <strain>MGAS6180</strain>
    </source>
</reference>
<evidence type="ECO:0000255" key="1">
    <source>
        <dbReference type="HAMAP-Rule" id="MF_01200"/>
    </source>
</evidence>
<sequence length="230" mass="24928">MKEERPIIALDFSSFEETKAFLDLFPAEEKLYVKIGMELYYAQGPDIVRSIKSLGHNVFLDLKLHDIPNTVRAAMAVLKELDIDMATVHAAGGVEMLKAAREGLGQGPTLIAVTQLTSTSEDQMRGDQNIQTSLLESVLHYSKGAAKAQLDGVVCSAQEVEAIKAVTPTGFTCLTPGIRPKGSNIGDQKRVMTPNQARRIGSDYIVVGRPITQAKDPVAAYQAIKAEWAG</sequence>
<accession>Q48U10</accession>
<gene>
    <name evidence="1" type="primary">pyrF</name>
    <name type="ordered locus">M28_Spy0683</name>
</gene>
<comment type="function">
    <text evidence="1">Catalyzes the decarboxylation of orotidine 5'-monophosphate (OMP) to uridine 5'-monophosphate (UMP).</text>
</comment>
<comment type="catalytic activity">
    <reaction evidence="1">
        <text>orotidine 5'-phosphate + H(+) = UMP + CO2</text>
        <dbReference type="Rhea" id="RHEA:11596"/>
        <dbReference type="ChEBI" id="CHEBI:15378"/>
        <dbReference type="ChEBI" id="CHEBI:16526"/>
        <dbReference type="ChEBI" id="CHEBI:57538"/>
        <dbReference type="ChEBI" id="CHEBI:57865"/>
        <dbReference type="EC" id="4.1.1.23"/>
    </reaction>
</comment>
<comment type="pathway">
    <text evidence="1">Pyrimidine metabolism; UMP biosynthesis via de novo pathway; UMP from orotate: step 2/2.</text>
</comment>
<comment type="subunit">
    <text evidence="1">Homodimer.</text>
</comment>
<comment type="similarity">
    <text evidence="1">Belongs to the OMP decarboxylase family. Type 1 subfamily.</text>
</comment>
<feature type="chain" id="PRO_0000241913" description="Orotidine 5'-phosphate decarboxylase">
    <location>
        <begin position="1"/>
        <end position="230"/>
    </location>
</feature>
<feature type="active site" description="Proton donor" evidence="1">
    <location>
        <position position="63"/>
    </location>
</feature>
<feature type="binding site" evidence="1">
    <location>
        <position position="11"/>
    </location>
    <ligand>
        <name>substrate</name>
    </ligand>
</feature>
<feature type="binding site" evidence="1">
    <location>
        <position position="34"/>
    </location>
    <ligand>
        <name>substrate</name>
    </ligand>
</feature>
<feature type="binding site" evidence="1">
    <location>
        <begin position="61"/>
        <end position="70"/>
    </location>
    <ligand>
        <name>substrate</name>
    </ligand>
</feature>
<feature type="binding site" evidence="1">
    <location>
        <position position="117"/>
    </location>
    <ligand>
        <name>substrate</name>
    </ligand>
</feature>
<feature type="binding site" evidence="1">
    <location>
        <position position="179"/>
    </location>
    <ligand>
        <name>substrate</name>
    </ligand>
</feature>
<feature type="binding site" evidence="1">
    <location>
        <position position="188"/>
    </location>
    <ligand>
        <name>substrate</name>
    </ligand>
</feature>
<feature type="binding site" evidence="1">
    <location>
        <position position="208"/>
    </location>
    <ligand>
        <name>substrate</name>
    </ligand>
</feature>
<feature type="binding site" evidence="1">
    <location>
        <position position="209"/>
    </location>
    <ligand>
        <name>substrate</name>
    </ligand>
</feature>
<proteinExistence type="inferred from homology"/>
<keyword id="KW-0210">Decarboxylase</keyword>
<keyword id="KW-0456">Lyase</keyword>
<keyword id="KW-0665">Pyrimidine biosynthesis</keyword>